<keyword id="KW-0963">Cytoplasm</keyword>
<keyword id="KW-0489">Methyltransferase</keyword>
<keyword id="KW-0698">rRNA processing</keyword>
<keyword id="KW-0949">S-adenosyl-L-methionine</keyword>
<keyword id="KW-0808">Transferase</keyword>
<organism>
    <name type="scientific">Lactobacillus helveticus (strain DPC 4571)</name>
    <dbReference type="NCBI Taxonomy" id="405566"/>
    <lineage>
        <taxon>Bacteria</taxon>
        <taxon>Bacillati</taxon>
        <taxon>Bacillota</taxon>
        <taxon>Bacilli</taxon>
        <taxon>Lactobacillales</taxon>
        <taxon>Lactobacillaceae</taxon>
        <taxon>Lactobacillus</taxon>
    </lineage>
</organism>
<accession>A8YXD7</accession>
<evidence type="ECO:0000255" key="1">
    <source>
        <dbReference type="HAMAP-Rule" id="MF_00074"/>
    </source>
</evidence>
<name>RSMG_LACH4</name>
<proteinExistence type="inferred from homology"/>
<sequence>MNPEKFILELSKHNFVLTDKQKEQFKLYFKFLIEVNEHVNLTRITEENEVYLKHFYDSITPLFVFGDVFKDGATLCDVGAGAGFPSIPLKILKPSLKVTIVDSLAKRLTFLKDLIAKLGLDNVELVHGRAEDVGQNKLYREKFDIVTARAVAKMSVLSEYCLPLVKKDGYFVALKGPKAEDELDEGKKALAVLGGKLIKDEELTLPGTTEERTLVLVKKVKETSKKYPRQAGTPRRKPIC</sequence>
<dbReference type="EC" id="2.1.1.-" evidence="1"/>
<dbReference type="EMBL" id="CP000517">
    <property type="protein sequence ID" value="ABX27715.1"/>
    <property type="molecule type" value="Genomic_DNA"/>
</dbReference>
<dbReference type="RefSeq" id="WP_012212284.1">
    <property type="nucleotide sequence ID" value="NC_010080.1"/>
</dbReference>
<dbReference type="SMR" id="A8YXD7"/>
<dbReference type="KEGG" id="lhe:lhv_1867"/>
<dbReference type="eggNOG" id="COG0357">
    <property type="taxonomic scope" value="Bacteria"/>
</dbReference>
<dbReference type="HOGENOM" id="CLU_065341_0_2_9"/>
<dbReference type="Proteomes" id="UP000000790">
    <property type="component" value="Chromosome"/>
</dbReference>
<dbReference type="GO" id="GO:0005829">
    <property type="term" value="C:cytosol"/>
    <property type="evidence" value="ECO:0007669"/>
    <property type="project" value="TreeGrafter"/>
</dbReference>
<dbReference type="GO" id="GO:0070043">
    <property type="term" value="F:rRNA (guanine-N7-)-methyltransferase activity"/>
    <property type="evidence" value="ECO:0007669"/>
    <property type="project" value="UniProtKB-UniRule"/>
</dbReference>
<dbReference type="CDD" id="cd02440">
    <property type="entry name" value="AdoMet_MTases"/>
    <property type="match status" value="1"/>
</dbReference>
<dbReference type="FunFam" id="3.40.50.150:FF:000041">
    <property type="entry name" value="Ribosomal RNA small subunit methyltransferase G"/>
    <property type="match status" value="1"/>
</dbReference>
<dbReference type="Gene3D" id="3.40.50.150">
    <property type="entry name" value="Vaccinia Virus protein VP39"/>
    <property type="match status" value="1"/>
</dbReference>
<dbReference type="HAMAP" id="MF_00074">
    <property type="entry name" value="16SrRNA_methyltr_G"/>
    <property type="match status" value="1"/>
</dbReference>
<dbReference type="InterPro" id="IPR003682">
    <property type="entry name" value="rRNA_ssu_MeTfrase_G"/>
</dbReference>
<dbReference type="InterPro" id="IPR029063">
    <property type="entry name" value="SAM-dependent_MTases_sf"/>
</dbReference>
<dbReference type="NCBIfam" id="TIGR00138">
    <property type="entry name" value="rsmG_gidB"/>
    <property type="match status" value="1"/>
</dbReference>
<dbReference type="PANTHER" id="PTHR31760">
    <property type="entry name" value="S-ADENOSYL-L-METHIONINE-DEPENDENT METHYLTRANSFERASES SUPERFAMILY PROTEIN"/>
    <property type="match status" value="1"/>
</dbReference>
<dbReference type="PANTHER" id="PTHR31760:SF0">
    <property type="entry name" value="S-ADENOSYL-L-METHIONINE-DEPENDENT METHYLTRANSFERASES SUPERFAMILY PROTEIN"/>
    <property type="match status" value="1"/>
</dbReference>
<dbReference type="Pfam" id="PF02527">
    <property type="entry name" value="GidB"/>
    <property type="match status" value="1"/>
</dbReference>
<dbReference type="PIRSF" id="PIRSF003078">
    <property type="entry name" value="GidB"/>
    <property type="match status" value="1"/>
</dbReference>
<dbReference type="SUPFAM" id="SSF53335">
    <property type="entry name" value="S-adenosyl-L-methionine-dependent methyltransferases"/>
    <property type="match status" value="1"/>
</dbReference>
<protein>
    <recommendedName>
        <fullName evidence="1">Ribosomal RNA small subunit methyltransferase G</fullName>
        <ecNumber evidence="1">2.1.1.-</ecNumber>
    </recommendedName>
    <alternativeName>
        <fullName evidence="1">16S rRNA 7-methylguanosine methyltransferase</fullName>
        <shortName evidence="1">16S rRNA m7G methyltransferase</shortName>
    </alternativeName>
</protein>
<feature type="chain" id="PRO_1000071197" description="Ribosomal RNA small subunit methyltransferase G">
    <location>
        <begin position="1"/>
        <end position="240"/>
    </location>
</feature>
<feature type="binding site" evidence="1">
    <location>
        <position position="79"/>
    </location>
    <ligand>
        <name>S-adenosyl-L-methionine</name>
        <dbReference type="ChEBI" id="CHEBI:59789"/>
    </ligand>
</feature>
<feature type="binding site" evidence="1">
    <location>
        <position position="84"/>
    </location>
    <ligand>
        <name>S-adenosyl-L-methionine</name>
        <dbReference type="ChEBI" id="CHEBI:59789"/>
    </ligand>
</feature>
<feature type="binding site" evidence="1">
    <location>
        <begin position="130"/>
        <end position="131"/>
    </location>
    <ligand>
        <name>S-adenosyl-L-methionine</name>
        <dbReference type="ChEBI" id="CHEBI:59789"/>
    </ligand>
</feature>
<feature type="binding site" evidence="1">
    <location>
        <position position="149"/>
    </location>
    <ligand>
        <name>S-adenosyl-L-methionine</name>
        <dbReference type="ChEBI" id="CHEBI:59789"/>
    </ligand>
</feature>
<reference key="1">
    <citation type="journal article" date="2008" name="J. Bacteriol.">
        <title>Genome sequence of Lactobacillus helveticus: an organism distinguished by selective gene loss and IS element expansion.</title>
        <authorList>
            <person name="Callanan M."/>
            <person name="Kaleta P."/>
            <person name="O'Callaghan J."/>
            <person name="O'Sullivan O."/>
            <person name="Jordan K."/>
            <person name="McAuliffe O."/>
            <person name="Sangrador-Vegas A."/>
            <person name="Slattery L."/>
            <person name="Fitzgerald G.F."/>
            <person name="Beresford T."/>
            <person name="Ross R.P."/>
        </authorList>
    </citation>
    <scope>NUCLEOTIDE SEQUENCE [LARGE SCALE GENOMIC DNA]</scope>
    <source>
        <strain>DPC 4571</strain>
    </source>
</reference>
<comment type="function">
    <text evidence="1">Specifically methylates the N7 position of a guanine in 16S rRNA.</text>
</comment>
<comment type="subcellular location">
    <subcellularLocation>
        <location evidence="1">Cytoplasm</location>
    </subcellularLocation>
</comment>
<comment type="similarity">
    <text evidence="1">Belongs to the methyltransferase superfamily. RNA methyltransferase RsmG family.</text>
</comment>
<gene>
    <name evidence="1" type="primary">rsmG</name>
    <name type="ordered locus">lhv_1867</name>
</gene>